<name>METE_CROS8</name>
<feature type="chain" id="PRO_1000017243" description="5-methyltetrahydropteroyltriglutamate--homocysteine methyltransferase">
    <location>
        <begin position="1"/>
        <end position="753"/>
    </location>
</feature>
<feature type="active site" description="Proton donor" evidence="1">
    <location>
        <position position="694"/>
    </location>
</feature>
<feature type="binding site" evidence="1">
    <location>
        <begin position="17"/>
        <end position="20"/>
    </location>
    <ligand>
        <name>5-methyltetrahydropteroyltri-L-glutamate</name>
        <dbReference type="ChEBI" id="CHEBI:58207"/>
    </ligand>
</feature>
<feature type="binding site" evidence="1">
    <location>
        <position position="117"/>
    </location>
    <ligand>
        <name>5-methyltetrahydropteroyltri-L-glutamate</name>
        <dbReference type="ChEBI" id="CHEBI:58207"/>
    </ligand>
</feature>
<feature type="binding site" evidence="1">
    <location>
        <begin position="431"/>
        <end position="433"/>
    </location>
    <ligand>
        <name>L-homocysteine</name>
        <dbReference type="ChEBI" id="CHEBI:58199"/>
    </ligand>
</feature>
<feature type="binding site" evidence="1">
    <location>
        <begin position="431"/>
        <end position="433"/>
    </location>
    <ligand>
        <name>L-methionine</name>
        <dbReference type="ChEBI" id="CHEBI:57844"/>
    </ligand>
</feature>
<feature type="binding site" evidence="1">
    <location>
        <position position="484"/>
    </location>
    <ligand>
        <name>L-homocysteine</name>
        <dbReference type="ChEBI" id="CHEBI:58199"/>
    </ligand>
</feature>
<feature type="binding site" evidence="1">
    <location>
        <position position="484"/>
    </location>
    <ligand>
        <name>L-methionine</name>
        <dbReference type="ChEBI" id="CHEBI:57844"/>
    </ligand>
</feature>
<feature type="binding site" evidence="1">
    <location>
        <begin position="515"/>
        <end position="516"/>
    </location>
    <ligand>
        <name>5-methyltetrahydropteroyltri-L-glutamate</name>
        <dbReference type="ChEBI" id="CHEBI:58207"/>
    </ligand>
</feature>
<feature type="binding site" evidence="1">
    <location>
        <position position="561"/>
    </location>
    <ligand>
        <name>5-methyltetrahydropteroyltri-L-glutamate</name>
        <dbReference type="ChEBI" id="CHEBI:58207"/>
    </ligand>
</feature>
<feature type="binding site" evidence="1">
    <location>
        <position position="599"/>
    </location>
    <ligand>
        <name>L-homocysteine</name>
        <dbReference type="ChEBI" id="CHEBI:58199"/>
    </ligand>
</feature>
<feature type="binding site" evidence="1">
    <location>
        <position position="599"/>
    </location>
    <ligand>
        <name>L-methionine</name>
        <dbReference type="ChEBI" id="CHEBI:57844"/>
    </ligand>
</feature>
<feature type="binding site" evidence="1">
    <location>
        <position position="605"/>
    </location>
    <ligand>
        <name>5-methyltetrahydropteroyltri-L-glutamate</name>
        <dbReference type="ChEBI" id="CHEBI:58207"/>
    </ligand>
</feature>
<feature type="binding site" evidence="1">
    <location>
        <position position="641"/>
    </location>
    <ligand>
        <name>Zn(2+)</name>
        <dbReference type="ChEBI" id="CHEBI:29105"/>
        <note>catalytic</note>
    </ligand>
</feature>
<feature type="binding site" evidence="1">
    <location>
        <position position="643"/>
    </location>
    <ligand>
        <name>Zn(2+)</name>
        <dbReference type="ChEBI" id="CHEBI:29105"/>
        <note>catalytic</note>
    </ligand>
</feature>
<feature type="binding site" evidence="1">
    <location>
        <position position="665"/>
    </location>
    <ligand>
        <name>Zn(2+)</name>
        <dbReference type="ChEBI" id="CHEBI:29105"/>
        <note>catalytic</note>
    </ligand>
</feature>
<feature type="binding site" evidence="1">
    <location>
        <position position="726"/>
    </location>
    <ligand>
        <name>Zn(2+)</name>
        <dbReference type="ChEBI" id="CHEBI:29105"/>
        <note>catalytic</note>
    </ligand>
</feature>
<gene>
    <name evidence="1" type="primary">metE</name>
    <name type="ordered locus">ESA_03731</name>
</gene>
<protein>
    <recommendedName>
        <fullName evidence="1">5-methyltetrahydropteroyltriglutamate--homocysteine methyltransferase</fullName>
        <ecNumber evidence="1">2.1.1.14</ecNumber>
    </recommendedName>
    <alternativeName>
        <fullName evidence="1">Cobalamin-independent methionine synthase</fullName>
    </alternativeName>
    <alternativeName>
        <fullName evidence="1">Methionine synthase, vitamin-B12 independent isozyme</fullName>
    </alternativeName>
</protein>
<accession>A7MQM1</accession>
<keyword id="KW-0028">Amino-acid biosynthesis</keyword>
<keyword id="KW-0479">Metal-binding</keyword>
<keyword id="KW-0486">Methionine biosynthesis</keyword>
<keyword id="KW-0489">Methyltransferase</keyword>
<keyword id="KW-1185">Reference proteome</keyword>
<keyword id="KW-0677">Repeat</keyword>
<keyword id="KW-0808">Transferase</keyword>
<keyword id="KW-0862">Zinc</keyword>
<dbReference type="EC" id="2.1.1.14" evidence="1"/>
<dbReference type="EMBL" id="CP000783">
    <property type="protein sequence ID" value="ABU78928.1"/>
    <property type="molecule type" value="Genomic_DNA"/>
</dbReference>
<dbReference type="RefSeq" id="WP_012126033.1">
    <property type="nucleotide sequence ID" value="NC_009778.1"/>
</dbReference>
<dbReference type="SMR" id="A7MQM1"/>
<dbReference type="KEGG" id="esa:ESA_03731"/>
<dbReference type="PATRIC" id="fig|290339.8.peg.3318"/>
<dbReference type="HOGENOM" id="CLU_013175_0_0_6"/>
<dbReference type="UniPathway" id="UPA00051">
    <property type="reaction ID" value="UER00082"/>
</dbReference>
<dbReference type="Proteomes" id="UP000000260">
    <property type="component" value="Chromosome"/>
</dbReference>
<dbReference type="GO" id="GO:0003871">
    <property type="term" value="F:5-methyltetrahydropteroyltriglutamate-homocysteine S-methyltransferase activity"/>
    <property type="evidence" value="ECO:0007669"/>
    <property type="project" value="UniProtKB-UniRule"/>
</dbReference>
<dbReference type="GO" id="GO:0008270">
    <property type="term" value="F:zinc ion binding"/>
    <property type="evidence" value="ECO:0007669"/>
    <property type="project" value="InterPro"/>
</dbReference>
<dbReference type="GO" id="GO:0009086">
    <property type="term" value="P:methionine biosynthetic process"/>
    <property type="evidence" value="ECO:0007669"/>
    <property type="project" value="UniProtKB-UniRule"/>
</dbReference>
<dbReference type="GO" id="GO:0032259">
    <property type="term" value="P:methylation"/>
    <property type="evidence" value="ECO:0007669"/>
    <property type="project" value="UniProtKB-KW"/>
</dbReference>
<dbReference type="CDD" id="cd03311">
    <property type="entry name" value="CIMS_C_terminal_like"/>
    <property type="match status" value="1"/>
</dbReference>
<dbReference type="CDD" id="cd03312">
    <property type="entry name" value="CIMS_N_terminal_like"/>
    <property type="match status" value="1"/>
</dbReference>
<dbReference type="FunFam" id="3.20.20.210:FF:000002">
    <property type="entry name" value="5-methyltetrahydropteroyltriglutamate--homocysteine methyltransferase"/>
    <property type="match status" value="1"/>
</dbReference>
<dbReference type="FunFam" id="3.20.20.210:FF:000003">
    <property type="entry name" value="5-methyltetrahydropteroyltriglutamate--homocysteine methyltransferase"/>
    <property type="match status" value="1"/>
</dbReference>
<dbReference type="Gene3D" id="3.20.20.210">
    <property type="match status" value="2"/>
</dbReference>
<dbReference type="HAMAP" id="MF_00172">
    <property type="entry name" value="Meth_synth"/>
    <property type="match status" value="1"/>
</dbReference>
<dbReference type="InterPro" id="IPR013215">
    <property type="entry name" value="Cbl-indep_Met_Synth_N"/>
</dbReference>
<dbReference type="InterPro" id="IPR006276">
    <property type="entry name" value="Cobalamin-indep_Met_synthase"/>
</dbReference>
<dbReference type="InterPro" id="IPR002629">
    <property type="entry name" value="Met_Synth_C/arc"/>
</dbReference>
<dbReference type="InterPro" id="IPR038071">
    <property type="entry name" value="UROD/MetE-like_sf"/>
</dbReference>
<dbReference type="NCBIfam" id="TIGR01371">
    <property type="entry name" value="met_syn_B12ind"/>
    <property type="match status" value="1"/>
</dbReference>
<dbReference type="NCBIfam" id="NF003556">
    <property type="entry name" value="PRK05222.1"/>
    <property type="match status" value="1"/>
</dbReference>
<dbReference type="PANTHER" id="PTHR30519">
    <property type="entry name" value="5-METHYLTETRAHYDROPTEROYLTRIGLUTAMATE--HOMOCYSTEINE METHYLTRANSFERASE"/>
    <property type="match status" value="1"/>
</dbReference>
<dbReference type="Pfam" id="PF08267">
    <property type="entry name" value="Meth_synt_1"/>
    <property type="match status" value="1"/>
</dbReference>
<dbReference type="Pfam" id="PF01717">
    <property type="entry name" value="Meth_synt_2"/>
    <property type="match status" value="1"/>
</dbReference>
<dbReference type="PIRSF" id="PIRSF000382">
    <property type="entry name" value="MeTrfase_B12_ind"/>
    <property type="match status" value="1"/>
</dbReference>
<dbReference type="SUPFAM" id="SSF51726">
    <property type="entry name" value="UROD/MetE-like"/>
    <property type="match status" value="2"/>
</dbReference>
<organism>
    <name type="scientific">Cronobacter sakazakii (strain ATCC BAA-894)</name>
    <name type="common">Enterobacter sakazakii</name>
    <dbReference type="NCBI Taxonomy" id="290339"/>
    <lineage>
        <taxon>Bacteria</taxon>
        <taxon>Pseudomonadati</taxon>
        <taxon>Pseudomonadota</taxon>
        <taxon>Gammaproteobacteria</taxon>
        <taxon>Enterobacterales</taxon>
        <taxon>Enterobacteriaceae</taxon>
        <taxon>Cronobacter</taxon>
    </lineage>
</organism>
<comment type="function">
    <text evidence="1">Catalyzes the transfer of a methyl group from 5-methyltetrahydrofolate to homocysteine resulting in methionine formation.</text>
</comment>
<comment type="catalytic activity">
    <reaction evidence="1">
        <text>5-methyltetrahydropteroyltri-L-glutamate + L-homocysteine = tetrahydropteroyltri-L-glutamate + L-methionine</text>
        <dbReference type="Rhea" id="RHEA:21196"/>
        <dbReference type="ChEBI" id="CHEBI:57844"/>
        <dbReference type="ChEBI" id="CHEBI:58140"/>
        <dbReference type="ChEBI" id="CHEBI:58199"/>
        <dbReference type="ChEBI" id="CHEBI:58207"/>
        <dbReference type="EC" id="2.1.1.14"/>
    </reaction>
</comment>
<comment type="cofactor">
    <cofactor evidence="1">
        <name>Zn(2+)</name>
        <dbReference type="ChEBI" id="CHEBI:29105"/>
    </cofactor>
    <text evidence="1">Binds 1 zinc ion per subunit.</text>
</comment>
<comment type="pathway">
    <text evidence="1">Amino-acid biosynthesis; L-methionine biosynthesis via de novo pathway; L-methionine from L-homocysteine (MetE route): step 1/1.</text>
</comment>
<comment type="similarity">
    <text evidence="1">Belongs to the vitamin-B12 independent methionine synthase family.</text>
</comment>
<sequence length="753" mass="84547">MTIHNHTLGFPRVGLRRELKKAQESYWAGKSTREELLAVGRELRARHWEQQKAAGIDLLPVGDFAWYDHVLTTSLLLGNVPARHQNADGTVDIDTLFRIGRGRAPTGEPAAAAEMTKWFNTNYHYMVPEFTKGQQFSLTWTQLLDEVDEALALGHHVKPVLLGPVTYLWLGKVKGEQFDRLSLLNDILPVYQQVIAELAKRGIQWVQIDEPALVLELPQAWLDAFKPAYEALKGQTKLLLTTYFEGVSDNLDTITALPVQGLHVDLVHGHDDVNELHRRLPQEWLLSAGVINGRNVWRADLTEKYAQLKAIAGQRELWVGSSCSLLHSPIDLSVETRLDAEVKSWFAFALQKCEELALLRDALNSGDTTKIEQWSAPIQARKHSARVHNPAVEQRLKAITPQDSQRAHAYPVRAEAQRARFNLPAWPTTTIGSFPQTTEIRGLRLDFKKGNLDAANYRTGIAEHIKQAIAEQERLGLDVLVHGEAERNDMVEYFGEHLDGFVFTQNGWVQSYGSRCVKPPVVIGDISRPAPITVEWAKYAQSLTDKPVKGMLTGPVTILCWSFPREDVSRETIAKQIALALRDEVADLEAAGIGIIQIDEPALREGLPLKRSDWDAYLAWGVEAFRLNAAVAKDDTQIHTHMCYCEFNDIMDSIAALDADVITIETSRSDMELLESFEEFEYPNEIGPGVYDIHSPNVPDVAWIEALLKKAAQRIPQERLWVNPDCGLKTRGWPETRAALANMVKAAQNLRQA</sequence>
<evidence type="ECO:0000255" key="1">
    <source>
        <dbReference type="HAMAP-Rule" id="MF_00172"/>
    </source>
</evidence>
<proteinExistence type="inferred from homology"/>
<reference key="1">
    <citation type="journal article" date="2010" name="PLoS ONE">
        <title>Genome sequence of Cronobacter sakazakii BAA-894 and comparative genomic hybridization analysis with other Cronobacter species.</title>
        <authorList>
            <person name="Kucerova E."/>
            <person name="Clifton S.W."/>
            <person name="Xia X.Q."/>
            <person name="Long F."/>
            <person name="Porwollik S."/>
            <person name="Fulton L."/>
            <person name="Fronick C."/>
            <person name="Minx P."/>
            <person name="Kyung K."/>
            <person name="Warren W."/>
            <person name="Fulton R."/>
            <person name="Feng D."/>
            <person name="Wollam A."/>
            <person name="Shah N."/>
            <person name="Bhonagiri V."/>
            <person name="Nash W.E."/>
            <person name="Hallsworth-Pepin K."/>
            <person name="Wilson R.K."/>
            <person name="McClelland M."/>
            <person name="Forsythe S.J."/>
        </authorList>
    </citation>
    <scope>NUCLEOTIDE SEQUENCE [LARGE SCALE GENOMIC DNA]</scope>
    <source>
        <strain>ATCC BAA-894</strain>
    </source>
</reference>